<keyword id="KW-0002">3D-structure</keyword>
<keyword id="KW-0217">Developmental protein</keyword>
<keyword id="KW-0238">DNA-binding</keyword>
<keyword id="KW-0371">Homeobox</keyword>
<keyword id="KW-0539">Nucleus</keyword>
<keyword id="KW-0562">Pair-rule protein</keyword>
<keyword id="KW-0597">Phosphoprotein</keyword>
<keyword id="KW-1185">Reference proteome</keyword>
<keyword id="KW-0804">Transcription</keyword>
<keyword id="KW-0805">Transcription regulation</keyword>
<proteinExistence type="evidence at protein level"/>
<evidence type="ECO:0000255" key="1">
    <source>
        <dbReference type="PROSITE-ProRule" id="PRU00108"/>
    </source>
</evidence>
<evidence type="ECO:0000256" key="2">
    <source>
        <dbReference type="SAM" id="MobiDB-lite"/>
    </source>
</evidence>
<evidence type="ECO:0000269" key="3">
    <source>
    </source>
</evidence>
<evidence type="ECO:0000269" key="4">
    <source>
    </source>
</evidence>
<evidence type="ECO:0000269" key="5">
    <source>
    </source>
</evidence>
<evidence type="ECO:0000269" key="6">
    <source>
    </source>
</evidence>
<evidence type="ECO:0000269" key="7">
    <source>
    </source>
</evidence>
<evidence type="ECO:0000305" key="8"/>
<evidence type="ECO:0007829" key="9">
    <source>
        <dbReference type="PDB" id="1FTZ"/>
    </source>
</evidence>
<evidence type="ECO:0007829" key="10">
    <source>
        <dbReference type="PDB" id="2XHS"/>
    </source>
</evidence>
<organism>
    <name type="scientific">Drosophila melanogaster</name>
    <name type="common">Fruit fly</name>
    <dbReference type="NCBI Taxonomy" id="7227"/>
    <lineage>
        <taxon>Eukaryota</taxon>
        <taxon>Metazoa</taxon>
        <taxon>Ecdysozoa</taxon>
        <taxon>Arthropoda</taxon>
        <taxon>Hexapoda</taxon>
        <taxon>Insecta</taxon>
        <taxon>Pterygota</taxon>
        <taxon>Neoptera</taxon>
        <taxon>Endopterygota</taxon>
        <taxon>Diptera</taxon>
        <taxon>Brachycera</taxon>
        <taxon>Muscomorpha</taxon>
        <taxon>Ephydroidea</taxon>
        <taxon>Drosophilidae</taxon>
        <taxon>Drosophila</taxon>
        <taxon>Sophophora</taxon>
    </lineage>
</organism>
<dbReference type="EMBL" id="X00854">
    <property type="protein sequence ID" value="CAA25408.1"/>
    <property type="molecule type" value="Genomic_DNA"/>
</dbReference>
<dbReference type="EMBL" id="AE014297">
    <property type="protein sequence ID" value="AAF54081.1"/>
    <property type="molecule type" value="Genomic_DNA"/>
</dbReference>
<dbReference type="EMBL" id="BT022173">
    <property type="protein sequence ID" value="AAY51567.1"/>
    <property type="molecule type" value="mRNA"/>
</dbReference>
<dbReference type="EMBL" id="AE001572">
    <property type="protein sequence ID" value="AAD19794.1"/>
    <property type="molecule type" value="Genomic_DNA"/>
</dbReference>
<dbReference type="EMBL" id="X78905">
    <property type="protein sequence ID" value="CAA55518.1"/>
    <property type="molecule type" value="Genomic_DNA"/>
</dbReference>
<dbReference type="EMBL" id="K01947">
    <property type="protein sequence ID" value="AAA28372.1"/>
    <property type="molecule type" value="Genomic_DNA"/>
</dbReference>
<dbReference type="PIR" id="A93334">
    <property type="entry name" value="WJFFFT"/>
</dbReference>
<dbReference type="RefSeq" id="NP_477498.1">
    <property type="nucleotide sequence ID" value="NM_058150.3"/>
</dbReference>
<dbReference type="PDB" id="1FTZ">
    <property type="method" value="NMR"/>
    <property type="chains" value="A=253-321"/>
</dbReference>
<dbReference type="PDB" id="2XHS">
    <property type="method" value="X-ray"/>
    <property type="resolution" value="2.80 A"/>
    <property type="chains" value="B=107-115"/>
</dbReference>
<dbReference type="PDBsum" id="1FTZ"/>
<dbReference type="PDBsum" id="2XHS"/>
<dbReference type="SMR" id="P02835"/>
<dbReference type="BioGRID" id="66032">
    <property type="interactions" value="36"/>
</dbReference>
<dbReference type="DIP" id="DIP-18500N"/>
<dbReference type="FunCoup" id="P02835">
    <property type="interactions" value="6"/>
</dbReference>
<dbReference type="IntAct" id="P02835">
    <property type="interactions" value="14"/>
</dbReference>
<dbReference type="STRING" id="7227.FBpp0081139"/>
<dbReference type="GlyGen" id="P02835">
    <property type="glycosylation" value="2 sites"/>
</dbReference>
<dbReference type="iPTMnet" id="P02835"/>
<dbReference type="PaxDb" id="7227-FBpp0081139"/>
<dbReference type="DNASU" id="40834"/>
<dbReference type="EnsemblMetazoa" id="FBtr0081625">
    <property type="protein sequence ID" value="FBpp0081139"/>
    <property type="gene ID" value="FBgn0001077"/>
</dbReference>
<dbReference type="GeneID" id="40834"/>
<dbReference type="KEGG" id="dme:Dmel_CG2047"/>
<dbReference type="AGR" id="FB:FBgn0001077"/>
<dbReference type="CTD" id="40834"/>
<dbReference type="FlyBase" id="FBgn0001077">
    <property type="gene designation" value="ftz"/>
</dbReference>
<dbReference type="VEuPathDB" id="VectorBase:FBgn0001077"/>
<dbReference type="eggNOG" id="KOG0489">
    <property type="taxonomic scope" value="Eukaryota"/>
</dbReference>
<dbReference type="GeneTree" id="ENSGT00940000175004"/>
<dbReference type="HOGENOM" id="CLU_589608_0_0_1"/>
<dbReference type="InParanoid" id="P02835"/>
<dbReference type="OMA" id="LASDCKD"/>
<dbReference type="OrthoDB" id="6159439at2759"/>
<dbReference type="PhylomeDB" id="P02835"/>
<dbReference type="SignaLink" id="P02835"/>
<dbReference type="BioGRID-ORCS" id="40834">
    <property type="hits" value="0 hits in 1 CRISPR screen"/>
</dbReference>
<dbReference type="EvolutionaryTrace" id="P02835"/>
<dbReference type="GenomeRNAi" id="40834"/>
<dbReference type="PRO" id="PR:P02835"/>
<dbReference type="Proteomes" id="UP000000803">
    <property type="component" value="Chromosome 3R"/>
</dbReference>
<dbReference type="Bgee" id="FBgn0001077">
    <property type="expression patterns" value="Expressed in parasegment (Drosophila) and 24 other cell types or tissues"/>
</dbReference>
<dbReference type="GO" id="GO:0005634">
    <property type="term" value="C:nucleus"/>
    <property type="evidence" value="ECO:0000318"/>
    <property type="project" value="GO_Central"/>
</dbReference>
<dbReference type="GO" id="GO:0001228">
    <property type="term" value="F:DNA-binding transcription activator activity, RNA polymerase II-specific"/>
    <property type="evidence" value="ECO:0000314"/>
    <property type="project" value="FlyBase"/>
</dbReference>
<dbReference type="GO" id="GO:0000981">
    <property type="term" value="F:DNA-binding transcription factor activity, RNA polymerase II-specific"/>
    <property type="evidence" value="ECO:0000314"/>
    <property type="project" value="FlyBase"/>
</dbReference>
<dbReference type="GO" id="GO:0000978">
    <property type="term" value="F:RNA polymerase II cis-regulatory region sequence-specific DNA binding"/>
    <property type="evidence" value="ECO:0000314"/>
    <property type="project" value="FlyBase"/>
</dbReference>
<dbReference type="GO" id="GO:0009952">
    <property type="term" value="P:anterior/posterior pattern specification"/>
    <property type="evidence" value="ECO:0000318"/>
    <property type="project" value="GO_Central"/>
</dbReference>
<dbReference type="GO" id="GO:0001708">
    <property type="term" value="P:cell fate specification"/>
    <property type="evidence" value="ECO:0000304"/>
    <property type="project" value="FlyBase"/>
</dbReference>
<dbReference type="GO" id="GO:0007417">
    <property type="term" value="P:central nervous system development"/>
    <property type="evidence" value="ECO:0000304"/>
    <property type="project" value="FlyBase"/>
</dbReference>
<dbReference type="GO" id="GO:0008354">
    <property type="term" value="P:germ cell migration"/>
    <property type="evidence" value="ECO:0000315"/>
    <property type="project" value="FlyBase"/>
</dbReference>
<dbReference type="GO" id="GO:0007506">
    <property type="term" value="P:gonadal mesoderm development"/>
    <property type="evidence" value="ECO:0000315"/>
    <property type="project" value="FlyBase"/>
</dbReference>
<dbReference type="GO" id="GO:0000122">
    <property type="term" value="P:negative regulation of transcription by RNA polymerase II"/>
    <property type="evidence" value="ECO:0000314"/>
    <property type="project" value="FlyBase"/>
</dbReference>
<dbReference type="GO" id="GO:0007366">
    <property type="term" value="P:periodic partitioning by pair rule gene"/>
    <property type="evidence" value="ECO:0000304"/>
    <property type="project" value="FlyBase"/>
</dbReference>
<dbReference type="GO" id="GO:0045944">
    <property type="term" value="P:positive regulation of transcription by RNA polymerase II"/>
    <property type="evidence" value="ECO:0000314"/>
    <property type="project" value="FlyBase"/>
</dbReference>
<dbReference type="GO" id="GO:0006355">
    <property type="term" value="P:regulation of DNA-templated transcription"/>
    <property type="evidence" value="ECO:0000315"/>
    <property type="project" value="FlyBase"/>
</dbReference>
<dbReference type="GO" id="GO:0035282">
    <property type="term" value="P:segmentation"/>
    <property type="evidence" value="ECO:0000315"/>
    <property type="project" value="FlyBase"/>
</dbReference>
<dbReference type="CDD" id="cd00086">
    <property type="entry name" value="homeodomain"/>
    <property type="match status" value="1"/>
</dbReference>
<dbReference type="Gene3D" id="1.10.10.60">
    <property type="entry name" value="Homeodomain-like"/>
    <property type="match status" value="1"/>
</dbReference>
<dbReference type="IDEAL" id="IID50242"/>
<dbReference type="InterPro" id="IPR050296">
    <property type="entry name" value="Antp_homeobox"/>
</dbReference>
<dbReference type="InterPro" id="IPR005567">
    <property type="entry name" value="FTZ_N"/>
</dbReference>
<dbReference type="InterPro" id="IPR001356">
    <property type="entry name" value="HD"/>
</dbReference>
<dbReference type="InterPro" id="IPR020479">
    <property type="entry name" value="HD_metazoa"/>
</dbReference>
<dbReference type="InterPro" id="IPR017970">
    <property type="entry name" value="Homeobox_CS"/>
</dbReference>
<dbReference type="InterPro" id="IPR009057">
    <property type="entry name" value="Homeodomain-like_sf"/>
</dbReference>
<dbReference type="PANTHER" id="PTHR45659">
    <property type="entry name" value="HOMEOBOX PROTEIN HOX"/>
    <property type="match status" value="1"/>
</dbReference>
<dbReference type="PANTHER" id="PTHR45659:SF22">
    <property type="entry name" value="HOMEOTIC PROTEIN ANTENNAPEDIA-RELATED"/>
    <property type="match status" value="1"/>
</dbReference>
<dbReference type="Pfam" id="PF03867">
    <property type="entry name" value="FTZ"/>
    <property type="match status" value="1"/>
</dbReference>
<dbReference type="Pfam" id="PF00046">
    <property type="entry name" value="Homeodomain"/>
    <property type="match status" value="1"/>
</dbReference>
<dbReference type="PRINTS" id="PR00024">
    <property type="entry name" value="HOMEOBOX"/>
</dbReference>
<dbReference type="SMART" id="SM00389">
    <property type="entry name" value="HOX"/>
    <property type="match status" value="1"/>
</dbReference>
<dbReference type="SUPFAM" id="SSF46689">
    <property type="entry name" value="Homeodomain-like"/>
    <property type="match status" value="1"/>
</dbReference>
<dbReference type="PROSITE" id="PS00027">
    <property type="entry name" value="HOMEOBOX_1"/>
    <property type="match status" value="1"/>
</dbReference>
<dbReference type="PROSITE" id="PS50071">
    <property type="entry name" value="HOMEOBOX_2"/>
    <property type="match status" value="1"/>
</dbReference>
<gene>
    <name type="primary">ftz</name>
    <name type="ORF">CG2047</name>
</gene>
<protein>
    <recommendedName>
        <fullName>Segmentation protein fushi tarazu</fullName>
    </recommendedName>
</protein>
<name>FTZ_DROME</name>
<sequence>MATTNSQSHYSYADNMNMYNMYHPHSLPPTYYDNSGSNAYYQNTSNYQGYYPQESYSESCYYYNNQEQVTTQTVPPVQPTTPPPKATKRKAEDDAASIIAAVEERPSTLRALLTNPVKKLKYTPDYFYTTVEQVKKAPAVSTKVTASPAPSYDQEYVTVPTPSASEDVDYLDVYSPQSQTQKLKNGDFATPPPTTPTSLPPLEGISTPPQSPGEKSSSAVSQEINHRIVTAPNGAGDFNWSHIEETLASDCKDSKRTRQTYTRYQTLELEKEFHFNRYITRRRRIDIANALSLSERQIKIWFQNRRMKSKKDRTLDSSPEHCGAGYTAMLPPLEATSTATTGAPSVPVPMYHHHQTTAAYPAYSHSHSHGYGLLNDYPQQQTHQQYDAYPQQYQHQCSYQQHPQDLYHLS</sequence>
<reference key="1">
    <citation type="journal article" date="1984" name="Nature">
        <title>Sequence of a Drosophila segmentation gene: protein structure homology with DNA-binding proteins.</title>
        <authorList>
            <person name="Laughon A."/>
            <person name="Scott M.P."/>
        </authorList>
    </citation>
    <scope>NUCLEOTIDE SEQUENCE [GENOMIC DNA]</scope>
    <scope>FUNCTION</scope>
</reference>
<reference key="2">
    <citation type="journal article" date="2000" name="Science">
        <title>The genome sequence of Drosophila melanogaster.</title>
        <authorList>
            <person name="Adams M.D."/>
            <person name="Celniker S.E."/>
            <person name="Holt R.A."/>
            <person name="Evans C.A."/>
            <person name="Gocayne J.D."/>
            <person name="Amanatides P.G."/>
            <person name="Scherer S.E."/>
            <person name="Li P.W."/>
            <person name="Hoskins R.A."/>
            <person name="Galle R.F."/>
            <person name="George R.A."/>
            <person name="Lewis S.E."/>
            <person name="Richards S."/>
            <person name="Ashburner M."/>
            <person name="Henderson S.N."/>
            <person name="Sutton G.G."/>
            <person name="Wortman J.R."/>
            <person name="Yandell M.D."/>
            <person name="Zhang Q."/>
            <person name="Chen L.X."/>
            <person name="Brandon R.C."/>
            <person name="Rogers Y.-H.C."/>
            <person name="Blazej R.G."/>
            <person name="Champe M."/>
            <person name="Pfeiffer B.D."/>
            <person name="Wan K.H."/>
            <person name="Doyle C."/>
            <person name="Baxter E.G."/>
            <person name="Helt G."/>
            <person name="Nelson C.R."/>
            <person name="Miklos G.L.G."/>
            <person name="Abril J.F."/>
            <person name="Agbayani A."/>
            <person name="An H.-J."/>
            <person name="Andrews-Pfannkoch C."/>
            <person name="Baldwin D."/>
            <person name="Ballew R.M."/>
            <person name="Basu A."/>
            <person name="Baxendale J."/>
            <person name="Bayraktaroglu L."/>
            <person name="Beasley E.M."/>
            <person name="Beeson K.Y."/>
            <person name="Benos P.V."/>
            <person name="Berman B.P."/>
            <person name="Bhandari D."/>
            <person name="Bolshakov S."/>
            <person name="Borkova D."/>
            <person name="Botchan M.R."/>
            <person name="Bouck J."/>
            <person name="Brokstein P."/>
            <person name="Brottier P."/>
            <person name="Burtis K.C."/>
            <person name="Busam D.A."/>
            <person name="Butler H."/>
            <person name="Cadieu E."/>
            <person name="Center A."/>
            <person name="Chandra I."/>
            <person name="Cherry J.M."/>
            <person name="Cawley S."/>
            <person name="Dahlke C."/>
            <person name="Davenport L.B."/>
            <person name="Davies P."/>
            <person name="de Pablos B."/>
            <person name="Delcher A."/>
            <person name="Deng Z."/>
            <person name="Mays A.D."/>
            <person name="Dew I."/>
            <person name="Dietz S.M."/>
            <person name="Dodson K."/>
            <person name="Doup L.E."/>
            <person name="Downes M."/>
            <person name="Dugan-Rocha S."/>
            <person name="Dunkov B.C."/>
            <person name="Dunn P."/>
            <person name="Durbin K.J."/>
            <person name="Evangelista C.C."/>
            <person name="Ferraz C."/>
            <person name="Ferriera S."/>
            <person name="Fleischmann W."/>
            <person name="Fosler C."/>
            <person name="Gabrielian A.E."/>
            <person name="Garg N.S."/>
            <person name="Gelbart W.M."/>
            <person name="Glasser K."/>
            <person name="Glodek A."/>
            <person name="Gong F."/>
            <person name="Gorrell J.H."/>
            <person name="Gu Z."/>
            <person name="Guan P."/>
            <person name="Harris M."/>
            <person name="Harris N.L."/>
            <person name="Harvey D.A."/>
            <person name="Heiman T.J."/>
            <person name="Hernandez J.R."/>
            <person name="Houck J."/>
            <person name="Hostin D."/>
            <person name="Houston K.A."/>
            <person name="Howland T.J."/>
            <person name="Wei M.-H."/>
            <person name="Ibegwam C."/>
            <person name="Jalali M."/>
            <person name="Kalush F."/>
            <person name="Karpen G.H."/>
            <person name="Ke Z."/>
            <person name="Kennison J.A."/>
            <person name="Ketchum K.A."/>
            <person name="Kimmel B.E."/>
            <person name="Kodira C.D."/>
            <person name="Kraft C.L."/>
            <person name="Kravitz S."/>
            <person name="Kulp D."/>
            <person name="Lai Z."/>
            <person name="Lasko P."/>
            <person name="Lei Y."/>
            <person name="Levitsky A.A."/>
            <person name="Li J.H."/>
            <person name="Li Z."/>
            <person name="Liang Y."/>
            <person name="Lin X."/>
            <person name="Liu X."/>
            <person name="Mattei B."/>
            <person name="McIntosh T.C."/>
            <person name="McLeod M.P."/>
            <person name="McPherson D."/>
            <person name="Merkulov G."/>
            <person name="Milshina N.V."/>
            <person name="Mobarry C."/>
            <person name="Morris J."/>
            <person name="Moshrefi A."/>
            <person name="Mount S.M."/>
            <person name="Moy M."/>
            <person name="Murphy B."/>
            <person name="Murphy L."/>
            <person name="Muzny D.M."/>
            <person name="Nelson D.L."/>
            <person name="Nelson D.R."/>
            <person name="Nelson K.A."/>
            <person name="Nixon K."/>
            <person name="Nusskern D.R."/>
            <person name="Pacleb J.M."/>
            <person name="Palazzolo M."/>
            <person name="Pittman G.S."/>
            <person name="Pan S."/>
            <person name="Pollard J."/>
            <person name="Puri V."/>
            <person name="Reese M.G."/>
            <person name="Reinert K."/>
            <person name="Remington K."/>
            <person name="Saunders R.D.C."/>
            <person name="Scheeler F."/>
            <person name="Shen H."/>
            <person name="Shue B.C."/>
            <person name="Siden-Kiamos I."/>
            <person name="Simpson M."/>
            <person name="Skupski M.P."/>
            <person name="Smith T.J."/>
            <person name="Spier E."/>
            <person name="Spradling A.C."/>
            <person name="Stapleton M."/>
            <person name="Strong R."/>
            <person name="Sun E."/>
            <person name="Svirskas R."/>
            <person name="Tector C."/>
            <person name="Turner R."/>
            <person name="Venter E."/>
            <person name="Wang A.H."/>
            <person name="Wang X."/>
            <person name="Wang Z.-Y."/>
            <person name="Wassarman D.A."/>
            <person name="Weinstock G.M."/>
            <person name="Weissenbach J."/>
            <person name="Williams S.M."/>
            <person name="Woodage T."/>
            <person name="Worley K.C."/>
            <person name="Wu D."/>
            <person name="Yang S."/>
            <person name="Yao Q.A."/>
            <person name="Ye J."/>
            <person name="Yeh R.-F."/>
            <person name="Zaveri J.S."/>
            <person name="Zhan M."/>
            <person name="Zhang G."/>
            <person name="Zhao Q."/>
            <person name="Zheng L."/>
            <person name="Zheng X.H."/>
            <person name="Zhong F.N."/>
            <person name="Zhong W."/>
            <person name="Zhou X."/>
            <person name="Zhu S.C."/>
            <person name="Zhu X."/>
            <person name="Smith H.O."/>
            <person name="Gibbs R.A."/>
            <person name="Myers E.W."/>
            <person name="Rubin G.M."/>
            <person name="Venter J.C."/>
        </authorList>
    </citation>
    <scope>NUCLEOTIDE SEQUENCE [LARGE SCALE GENOMIC DNA]</scope>
    <source>
        <strain>Berkeley</strain>
    </source>
</reference>
<reference key="3">
    <citation type="journal article" date="2002" name="Genome Biol.">
        <title>Annotation of the Drosophila melanogaster euchromatic genome: a systematic review.</title>
        <authorList>
            <person name="Misra S."/>
            <person name="Crosby M.A."/>
            <person name="Mungall C.J."/>
            <person name="Matthews B.B."/>
            <person name="Campbell K.S."/>
            <person name="Hradecky P."/>
            <person name="Huang Y."/>
            <person name="Kaminker J.S."/>
            <person name="Millburn G.H."/>
            <person name="Prochnik S.E."/>
            <person name="Smith C.D."/>
            <person name="Tupy J.L."/>
            <person name="Whitfield E.J."/>
            <person name="Bayraktaroglu L."/>
            <person name="Berman B.P."/>
            <person name="Bettencourt B.R."/>
            <person name="Celniker S.E."/>
            <person name="de Grey A.D.N.J."/>
            <person name="Drysdale R.A."/>
            <person name="Harris N.L."/>
            <person name="Richter J."/>
            <person name="Russo S."/>
            <person name="Schroeder A.J."/>
            <person name="Shu S.Q."/>
            <person name="Stapleton M."/>
            <person name="Yamada C."/>
            <person name="Ashburner M."/>
            <person name="Gelbart W.M."/>
            <person name="Rubin G.M."/>
            <person name="Lewis S.E."/>
        </authorList>
    </citation>
    <scope>GENOME REANNOTATION</scope>
    <source>
        <strain>Berkeley</strain>
    </source>
</reference>
<reference key="4">
    <citation type="submission" date="2005-08" db="EMBL/GenBank/DDBJ databases">
        <authorList>
            <person name="Stapleton M."/>
            <person name="Carlson J.W."/>
            <person name="Chavez C."/>
            <person name="Frise E."/>
            <person name="George R.A."/>
            <person name="Pacleb J.M."/>
            <person name="Park S."/>
            <person name="Wan K.H."/>
            <person name="Yu C."/>
            <person name="Celniker S.E."/>
        </authorList>
    </citation>
    <scope>NUCLEOTIDE SEQUENCE [LARGE SCALE MRNA]</scope>
    <source>
        <strain>Berkeley</strain>
    </source>
</reference>
<reference key="5">
    <citation type="submission" date="1999-01" db="EMBL/GenBank/DDBJ databases">
        <title>Complete sequence of the Antennapedia complex of Drosophila.</title>
        <authorList>
            <person name="Celniker S.E."/>
            <person name="Pfeiffer B."/>
            <person name="Knafels J."/>
            <person name="Martin C.H."/>
            <person name="Mayeda C.A."/>
            <person name="Palazzolo M.J."/>
        </authorList>
    </citation>
    <scope>NUCLEOTIDE SEQUENCE [GENOMIC DNA]</scope>
    <source>
        <strain>Berkeley</strain>
    </source>
</reference>
<reference key="6">
    <citation type="journal article" date="1990" name="Genes Dev.">
        <title>Mutations affecting the stability of the fushi tarazu protein of Drosophila.</title>
        <authorList>
            <person name="Kellerman K.A."/>
            <person name="Mattson D.M."/>
            <person name="Duncan I."/>
        </authorList>
    </citation>
    <scope>NUCLEOTIDE SEQUENCE [GENOMIC DNA] OF 207-218</scope>
    <scope>MUTAGENESIS</scope>
</reference>
<reference key="7">
    <citation type="journal article" date="1984" name="Cell">
        <title>A homologous protein-coding sequence in Drosophila homeotic genes and its conservation in other metazoans.</title>
        <authorList>
            <person name="McGinnis W."/>
            <person name="Garber R.L."/>
            <person name="Wirz J."/>
            <person name="Kuroiwa A."/>
            <person name="Gehring W.J."/>
        </authorList>
    </citation>
    <scope>NUCLEOTIDE SEQUENCE [GENOMIC DNA] OF 247-320</scope>
</reference>
<reference key="8">
    <citation type="journal article" date="1984" name="Proc. Natl. Acad. Sci. U.S.A.">
        <title>Structural relationships among genes that control development: sequence homology between the Antennapedia, Ultrabithorax, and fushi tarazu loci of Drosophila.</title>
        <authorList>
            <person name="Scott M.P."/>
            <person name="Weiner A.J."/>
        </authorList>
    </citation>
    <scope>NUCLEOTIDE SEQUENCE [GENOMIC DNA] OF 250-320</scope>
</reference>
<reference key="9">
    <citation type="journal article" date="1988" name="Science">
        <title>Expression and function of the segmentation gene fushi tarazu during Drosophila neurogenesis.</title>
        <authorList>
            <person name="Doe C.Q."/>
            <person name="Hiromi Y."/>
            <person name="Gehring W.J."/>
            <person name="Goodman C.S."/>
        </authorList>
    </citation>
    <scope>FUNCTION</scope>
</reference>
<reference key="10">
    <citation type="journal article" date="1988" name="Genes Dev.">
        <title>Expression, modification, and localization of the fushi tarazu protein in Drosophila embryos.</title>
        <authorList>
            <person name="Krause H.M."/>
            <person name="Klemenz R."/>
            <person name="Gehring W.J."/>
        </authorList>
    </citation>
    <scope>FUNCTION</scope>
    <scope>SUBCELLULAR LOCATION</scope>
    <scope>DEVELOPMENTAL STAGE</scope>
</reference>
<reference key="11">
    <citation type="journal article" date="1989" name="EMBO J.">
        <title>Stage-specific phosphorylation of the fushi tarazu protein during Drosophila development.</title>
        <authorList>
            <person name="Krause H.M."/>
            <person name="Gehring W.J."/>
        </authorList>
    </citation>
    <scope>PHOSPHORYLATION</scope>
</reference>
<reference key="12">
    <citation type="journal article" date="1994" name="J. Mol. Biol.">
        <title>Nuclear magnetic resonance solution structure of the fushi tarazu homeodomain from Drosophila and comparison with the Antennapedia homeodomain.</title>
        <authorList>
            <person name="Qian Y.Q."/>
            <person name="Furukubo-Tokunaga K."/>
            <person name="Resendez-Perez D."/>
            <person name="Mueller M."/>
            <person name="Gehring W.J."/>
            <person name="Wuethrich K."/>
        </authorList>
    </citation>
    <scope>STRUCTURE BY NMR OF HOMEOBOX</scope>
</reference>
<accession>P02835</accession>
<accession>O96929</accession>
<accession>Q4V6Y3</accession>
<accession>Q9V3W3</accession>
<feature type="chain" id="PRO_0000049062" description="Segmentation protein fushi tarazu">
    <location>
        <begin position="1"/>
        <end position="410"/>
    </location>
</feature>
<feature type="DNA-binding region" description="Homeobox" evidence="1">
    <location>
        <begin position="254"/>
        <end position="313"/>
    </location>
</feature>
<feature type="region of interest" description="Disordered" evidence="2">
    <location>
        <begin position="71"/>
        <end position="93"/>
    </location>
</feature>
<feature type="region of interest" description="Disordered" evidence="2">
    <location>
        <begin position="138"/>
        <end position="157"/>
    </location>
</feature>
<feature type="region of interest" description="Disordered" evidence="2">
    <location>
        <begin position="175"/>
        <end position="221"/>
    </location>
</feature>
<feature type="compositionally biased region" description="Pro residues" evidence="2">
    <location>
        <begin position="76"/>
        <end position="85"/>
    </location>
</feature>
<feature type="compositionally biased region" description="Pro residues" evidence="2">
    <location>
        <begin position="190"/>
        <end position="199"/>
    </location>
</feature>
<feature type="mutagenesis site" description="In allele Ual2; half-life is increased." evidence="3">
    <original>P</original>
    <variation>L</variation>
    <location>
        <position position="208"/>
    </location>
</feature>
<feature type="mutagenesis site" description="In allele Ual1; half-life is increased." evidence="3">
    <original>P</original>
    <variation>L</variation>
    <location>
        <position position="212"/>
    </location>
</feature>
<feature type="mutagenesis site" description="In allele Ual3; half-life is increased." evidence="3">
    <original>P</original>
    <variation>S</variation>
    <location>
        <position position="212"/>
    </location>
</feature>
<feature type="sequence conflict" description="In Ref. 1; CAA25408." evidence="8" ref="1">
    <original>Y</original>
    <variation>YHSY</variation>
    <location>
        <position position="47"/>
    </location>
</feature>
<feature type="sequence conflict" description="In Ref. 1; CAA25408." evidence="8" ref="1">
    <original>S</original>
    <variation>T</variation>
    <location>
        <position position="141"/>
    </location>
</feature>
<feature type="sequence conflict" description="In Ref. 7; AAA28372." evidence="8" ref="7">
    <original>LAS</original>
    <variation>MLT</variation>
    <location>
        <begin position="247"/>
        <end position="249"/>
    </location>
</feature>
<feature type="sequence conflict" description="In Ref. 1; CAA25408." evidence="8" ref="1">
    <original>H</original>
    <variation>Q</variation>
    <location>
        <position position="395"/>
    </location>
</feature>
<feature type="helix" evidence="10">
    <location>
        <begin position="108"/>
        <end position="113"/>
    </location>
</feature>
<feature type="helix" evidence="9">
    <location>
        <begin position="263"/>
        <end position="273"/>
    </location>
</feature>
<feature type="helix" evidence="9">
    <location>
        <begin position="281"/>
        <end position="290"/>
    </location>
</feature>
<feature type="helix" evidence="9">
    <location>
        <begin position="295"/>
        <end position="305"/>
    </location>
</feature>
<feature type="helix" evidence="9">
    <location>
        <begin position="315"/>
        <end position="317"/>
    </location>
</feature>
<comment type="function">
    <text evidence="5 6 7">May play a role in determining neuronal identity, may be directly involved in specifying identity of individual neurons. Required during embryogenesis for the process of body segmentation. Homeotic protein, required in alternating segment primordia, it specifies the correct number of segments.</text>
</comment>
<comment type="interaction">
    <interactant intactId="EBI-125786">
        <id>P02835</id>
    </interactant>
    <interactant intactId="EBI-160447">
        <id>P33244</id>
        <label>ftz-f1</label>
    </interactant>
    <organismsDiffer>false</organismsDiffer>
    <experiments>3</experiments>
</comment>
<comment type="interaction">
    <interactant intactId="EBI-125786">
        <id>P02835</id>
    </interactant>
    <interactant intactId="EBI-105329">
        <id>P23758</id>
        <label>Poxn</label>
    </interactant>
    <organismsDiffer>false</organismsDiffer>
    <experiments>3</experiments>
</comment>
<comment type="subcellular location">
    <subcellularLocation>
        <location evidence="1 6">Nucleus</location>
    </subcellularLocation>
</comment>
<comment type="tissue specificity">
    <text>Expressed early in development in a striped pattern at the blastoderm stage. Later expressed in a specific subset of neuronal precursor cells, neurons and glia in the developing CNS. Between 5 and 6 hours of development, found in the midline precursor-2 cells in a segmentally repeating pattern. Expression in many other neuronal precursors follows and reaches a second peak of abundance at 9 hours of development. Expressed in the hindgut between 11-15 hours of development.</text>
</comment>
<comment type="developmental stage">
    <text evidence="6">Expressed during embryonic development.</text>
</comment>
<comment type="PTM">
    <text evidence="4">Phosphorylated at as many as 16 sites.</text>
</comment>
<comment type="miscellaneous">
    <text>'Fushi tarazu' means 'segment deficient' in Japanese. Flies lacking ftz exhibit embryos with half the usual number of body segments.</text>
</comment>
<comment type="similarity">
    <text evidence="8">Belongs to the Antp homeobox family.</text>
</comment>